<name>AOFB_BOVIN</name>
<evidence type="ECO:0000250" key="1"/>
<evidence type="ECO:0000250" key="2">
    <source>
        <dbReference type="UniProtKB" id="P19643"/>
    </source>
</evidence>
<evidence type="ECO:0000250" key="3">
    <source>
        <dbReference type="UniProtKB" id="P27338"/>
    </source>
</evidence>
<evidence type="ECO:0000250" key="4">
    <source>
        <dbReference type="UniProtKB" id="Q8BW75"/>
    </source>
</evidence>
<evidence type="ECO:0000269" key="5">
    <source>
    </source>
</evidence>
<evidence type="ECO:0000269" key="6">
    <source>
    </source>
</evidence>
<evidence type="ECO:0000269" key="7">
    <source>
    </source>
</evidence>
<evidence type="ECO:0000305" key="8"/>
<evidence type="ECO:0000305" key="9">
    <source>
    </source>
</evidence>
<feature type="initiator methionine" description="Removed" evidence="5">
    <location>
        <position position="1"/>
    </location>
</feature>
<feature type="chain" id="PRO_0000099856" description="Amine oxidase [flavin-containing] B">
    <location>
        <begin position="2"/>
        <end position="520"/>
    </location>
</feature>
<feature type="topological domain" description="Cytoplasmic" evidence="1">
    <location>
        <begin position="2"/>
        <end position="489"/>
    </location>
</feature>
<feature type="transmembrane region" description="Helical; Anchor for type IV membrane protein" evidence="1">
    <location>
        <begin position="490"/>
        <end position="516"/>
    </location>
</feature>
<feature type="topological domain" description="Mitochondrial intermembrane" evidence="1">
    <location>
        <begin position="517"/>
        <end position="520"/>
    </location>
</feature>
<feature type="site" description="Important for catalytic activity" evidence="1">
    <location>
        <position position="156"/>
    </location>
</feature>
<feature type="site" description="Important for catalytic activity" evidence="1">
    <location>
        <position position="365"/>
    </location>
</feature>
<feature type="site" description="Important for catalytic activity" evidence="1">
    <location>
        <position position="382"/>
    </location>
</feature>
<feature type="modified residue" description="N-acetylserine" evidence="5">
    <location>
        <position position="2"/>
    </location>
</feature>
<feature type="modified residue" description="N6-acetyllysine" evidence="4">
    <location>
        <position position="52"/>
    </location>
</feature>
<feature type="modified residue" description="S-8alpha-FAD cysteine" evidence="3">
    <location>
        <position position="397"/>
    </location>
</feature>
<feature type="sequence conflict" description="In Ref. 1; AAF23179." evidence="8" ref="1">
    <original>S</original>
    <variation>N</variation>
    <location>
        <position position="3"/>
    </location>
</feature>
<feature type="sequence conflict" description="In Ref. 4; AA sequence." evidence="8" ref="4">
    <original>M</original>
    <variation>G</variation>
    <location>
        <position position="270"/>
    </location>
</feature>
<feature type="sequence conflict" description="In Ref. 1; AAF23179." evidence="8" ref="1">
    <original>I</original>
    <variation>T</variation>
    <location>
        <position position="286"/>
    </location>
</feature>
<feature type="sequence conflict" description="In Ref. 4; AA sequence." evidence="8" ref="4">
    <original>SIV</original>
    <variation>PIM</variation>
    <location>
        <begin position="297"/>
        <end position="299"/>
    </location>
</feature>
<feature type="sequence conflict" description="In Ref. 4; AA sequence." evidence="8" ref="4">
    <original>R</original>
    <variation>K</variation>
    <location>
        <position position="307"/>
    </location>
</feature>
<feature type="sequence conflict" description="In Ref. 4; AA sequence." evidence="8" ref="4">
    <original>I</original>
    <variation>L</variation>
    <location>
        <position position="341"/>
    </location>
</feature>
<feature type="sequence conflict" description="In Ref. 4; AA sequence." evidence="8" ref="4">
    <original>I</original>
    <variation>K</variation>
    <location>
        <position position="344"/>
    </location>
</feature>
<feature type="sequence conflict" description="In Ref. 4; AA sequence." evidence="8" ref="4">
    <original>S</original>
    <variation>A</variation>
    <location>
        <position position="400"/>
    </location>
</feature>
<feature type="sequence conflict" description="In Ref. 4; AA sequence." evidence="8" ref="4">
    <original>TTTFLQRH</original>
    <variation>STSSMMMP</variation>
    <location>
        <begin position="478"/>
        <end position="485"/>
    </location>
</feature>
<feature type="sequence conflict" description="In Ref. 2; AAI19942." evidence="8" ref="2">
    <original>F</original>
    <variation>Y</variation>
    <location>
        <position position="509"/>
    </location>
</feature>
<feature type="sequence conflict" description="In Ref. 1; AAF23179." evidence="8" ref="1">
    <original>I</original>
    <variation>V</variation>
    <location>
        <position position="520"/>
    </location>
</feature>
<sequence>MSSKCDVVVVGGGISGMAAAKLLHDSGLNVIVLEARDRVGGRTYTLRNQKVKYVDLGGSYVGPTQNHILRLSKELGLETYKVNEVERLIHHTKGKSYPFRGSFPSVWNPITYLDHNNLWRTMDDMGREIPSDAPWKAPLAEQWDLMTMKELLDKICWTESSKQLAILFVNLCVTAEIHEVSALWFLWYVKQCGGTTRIFSTSNGGQERKFVGGSGQVSERIMDLLGDRVKLERPVIHIDQTGENVLVETLNHELYEAKYVISAVPPVLGMKIHFNPPLPMMRNQLITRVPLGSVIKSIVYYKEPFWRNMDYCGSMIIEGEEAPVAYALDDTKPDGSYPAIIGFILAHKARKLARLTKEERLKKLCDLYAKVLGSQEALHPVHYEEKNWCEEQYSGGCYTSYFPPGIMTQYGRVLRQPVGRIYFAGTETATHWSGYMEGAVEAGERAAREILHAMGKIPEDEIWLPEPESVDVPAKPITTTFLQRHLPSVPGLLKLIGLTTIFSATALGFLAHKRGLLVRI</sequence>
<protein>
    <recommendedName>
        <fullName evidence="3">Amine oxidase [flavin-containing] B</fullName>
        <ecNumber evidence="7">1.4.3.21</ecNumber>
        <ecNumber evidence="3">1.4.3.4</ecNumber>
    </recommendedName>
    <alternativeName>
        <fullName>Monoamine oxidase type B</fullName>
        <shortName>MAO-B</shortName>
    </alternativeName>
</protein>
<reference key="1">
    <citation type="submission" date="1999-12" db="EMBL/GenBank/DDBJ databases">
        <authorList>
            <person name="Chung P.P."/>
            <person name="Vaidyanathan G."/>
            <person name="Lanier S.M."/>
        </authorList>
    </citation>
    <scope>NUCLEOTIDE SEQUENCE [MRNA]</scope>
</reference>
<reference key="2">
    <citation type="submission" date="2006-08" db="EMBL/GenBank/DDBJ databases">
        <authorList>
            <consortium name="NIH - Mammalian Gene Collection (MGC) project"/>
        </authorList>
    </citation>
    <scope>NUCLEOTIDE SEQUENCE [LARGE SCALE MRNA]</scope>
    <source>
        <strain>Hereford</strain>
        <tissue>Basal ganglia</tissue>
    </source>
</reference>
<reference key="3">
    <citation type="journal article" date="2000" name="Protein Expr. Purif.">
        <title>High-level expression of human liver monoamine oxidase B in Pichia pastoris.</title>
        <authorList>
            <person name="Newton-Vinson P."/>
            <person name="Hubalek F."/>
            <person name="Edmondson D.E."/>
        </authorList>
    </citation>
    <scope>PROTEIN SEQUENCE OF 2-17</scope>
    <scope>ACETYLATION AT SER-2</scope>
    <scope>MASS SPECTROMETRY</scope>
</reference>
<reference key="4">
    <citation type="journal article" date="1989" name="Biochem. J.">
        <title>The primary structure of bovine monoamine oxidase type A. Comparison with peptide sequences of bovine monoamine oxidase type B and other flavoenzymes.</title>
        <authorList>
            <person name="Powell J.F."/>
            <person name="Hsu Y.-P.P."/>
            <person name="Weyler W."/>
            <person name="Chen S.A."/>
            <person name="Salach J."/>
            <person name="Andrikopoulos K."/>
            <person name="Mallet J."/>
            <person name="Breakefield X.O."/>
        </authorList>
    </citation>
    <scope>PROTEIN SEQUENCE OF 22-36; 53-70; 101-120; 259-279; 289-323; 327-346; 362-403; 420-431 AND 456-485</scope>
</reference>
<reference key="5">
    <citation type="journal article" date="1989" name="Biochem. J.">
        <title>Monoamine oxidase A from human placenta and monoamine oxidase B from bovine liver both have one FAD per subunit.</title>
        <authorList>
            <person name="Weyler W."/>
        </authorList>
    </citation>
    <scope>DETERMINATION OF PROTEIN-FAD RATIO</scope>
    <scope>COFACTOR</scope>
    <source>
        <tissue>Liver</tissue>
    </source>
</reference>
<reference key="6">
    <citation type="journal article" date="1994" name="Biochemistry">
        <title>Structure-activity relationships in the oxidation of benzylamine analogues by bovine liver mitochondrial monoamine oxidase B.</title>
        <authorList>
            <person name="Walker M.C."/>
            <person name="Edmondson D.E."/>
        </authorList>
    </citation>
    <scope>FUNCTION</scope>
    <scope>CATALYTIC ACTIVITY</scope>
    <scope>BIOPHYSICOCHEMICAL PROPERTIES</scope>
</reference>
<accession>P56560</accession>
<accession>Q0P5K2</accession>
<accession>Q864W3</accession>
<dbReference type="EC" id="1.4.3.21" evidence="7"/>
<dbReference type="EC" id="1.4.3.4" evidence="3"/>
<dbReference type="EMBL" id="AF217955">
    <property type="protein sequence ID" value="AAF23179.1"/>
    <property type="molecule type" value="mRNA"/>
</dbReference>
<dbReference type="EMBL" id="BC119941">
    <property type="protein sequence ID" value="AAI19942.1"/>
    <property type="molecule type" value="mRNA"/>
</dbReference>
<dbReference type="PIR" id="S07573">
    <property type="entry name" value="S07573"/>
</dbReference>
<dbReference type="RefSeq" id="NP_808813.2">
    <property type="nucleotide sequence ID" value="NM_177944.2"/>
</dbReference>
<dbReference type="SMR" id="P56560"/>
<dbReference type="FunCoup" id="P56560">
    <property type="interactions" value="627"/>
</dbReference>
<dbReference type="STRING" id="9913.ENSBTAP00000001698"/>
<dbReference type="BindingDB" id="P56560"/>
<dbReference type="ChEMBL" id="CHEMBL2756"/>
<dbReference type="DrugCentral" id="P56560"/>
<dbReference type="iPTMnet" id="P56560"/>
<dbReference type="PaxDb" id="9913-ENSBTAP00000001698"/>
<dbReference type="PeptideAtlas" id="P56560"/>
<dbReference type="GeneID" id="338445"/>
<dbReference type="KEGG" id="bta:338445"/>
<dbReference type="CTD" id="4129"/>
<dbReference type="eggNOG" id="KOG0029">
    <property type="taxonomic scope" value="Eukaryota"/>
</dbReference>
<dbReference type="HOGENOM" id="CLU_004498_0_1_1"/>
<dbReference type="InParanoid" id="P56560"/>
<dbReference type="OrthoDB" id="7777654at2759"/>
<dbReference type="TreeFam" id="TF313314"/>
<dbReference type="BRENDA" id="1.4.3.4">
    <property type="organism ID" value="908"/>
</dbReference>
<dbReference type="PRO" id="PR:P56560"/>
<dbReference type="Proteomes" id="UP000009136">
    <property type="component" value="Unplaced"/>
</dbReference>
<dbReference type="GO" id="GO:0005741">
    <property type="term" value="C:mitochondrial outer membrane"/>
    <property type="evidence" value="ECO:0007669"/>
    <property type="project" value="UniProtKB-SubCell"/>
</dbReference>
<dbReference type="GO" id="GO:0005739">
    <property type="term" value="C:mitochondrion"/>
    <property type="evidence" value="ECO:0000250"/>
    <property type="project" value="UniProtKB"/>
</dbReference>
<dbReference type="GO" id="GO:0050660">
    <property type="term" value="F:flavin adenine dinucleotide binding"/>
    <property type="evidence" value="ECO:0000318"/>
    <property type="project" value="GO_Central"/>
</dbReference>
<dbReference type="GO" id="GO:0097621">
    <property type="term" value="F:monoamine oxidase activity"/>
    <property type="evidence" value="ECO:0000250"/>
    <property type="project" value="UniProtKB"/>
</dbReference>
<dbReference type="GO" id="GO:0008131">
    <property type="term" value="F:primary methylamine oxidase activity"/>
    <property type="evidence" value="ECO:0000250"/>
    <property type="project" value="UniProtKB"/>
</dbReference>
<dbReference type="Gene3D" id="3.90.660.10">
    <property type="match status" value="2"/>
</dbReference>
<dbReference type="Gene3D" id="6.10.250.130">
    <property type="match status" value="1"/>
</dbReference>
<dbReference type="Gene3D" id="3.50.50.60">
    <property type="entry name" value="FAD/NAD(P)-binding domain"/>
    <property type="match status" value="2"/>
</dbReference>
<dbReference type="InterPro" id="IPR002937">
    <property type="entry name" value="Amino_oxidase"/>
</dbReference>
<dbReference type="InterPro" id="IPR036188">
    <property type="entry name" value="FAD/NAD-bd_sf"/>
</dbReference>
<dbReference type="InterPro" id="IPR001613">
    <property type="entry name" value="Flavin_amine_oxidase"/>
</dbReference>
<dbReference type="InterPro" id="IPR050703">
    <property type="entry name" value="Flavin_MAO"/>
</dbReference>
<dbReference type="PANTHER" id="PTHR43563">
    <property type="entry name" value="AMINE OXIDASE"/>
    <property type="match status" value="1"/>
</dbReference>
<dbReference type="PANTHER" id="PTHR43563:SF1">
    <property type="entry name" value="AMINE OXIDASE [FLAVIN-CONTAINING] B"/>
    <property type="match status" value="1"/>
</dbReference>
<dbReference type="Pfam" id="PF01593">
    <property type="entry name" value="Amino_oxidase"/>
    <property type="match status" value="1"/>
</dbReference>
<dbReference type="PRINTS" id="PR00757">
    <property type="entry name" value="AMINEOXDASEF"/>
</dbReference>
<dbReference type="SUPFAM" id="SSF54373">
    <property type="entry name" value="FAD-linked reductases, C-terminal domain"/>
    <property type="match status" value="1"/>
</dbReference>
<dbReference type="SUPFAM" id="SSF51905">
    <property type="entry name" value="FAD/NAD(P)-binding domain"/>
    <property type="match status" value="1"/>
</dbReference>
<proteinExistence type="evidence at protein level"/>
<organism>
    <name type="scientific">Bos taurus</name>
    <name type="common">Bovine</name>
    <dbReference type="NCBI Taxonomy" id="9913"/>
    <lineage>
        <taxon>Eukaryota</taxon>
        <taxon>Metazoa</taxon>
        <taxon>Chordata</taxon>
        <taxon>Craniata</taxon>
        <taxon>Vertebrata</taxon>
        <taxon>Euteleostomi</taxon>
        <taxon>Mammalia</taxon>
        <taxon>Eutheria</taxon>
        <taxon>Laurasiatheria</taxon>
        <taxon>Artiodactyla</taxon>
        <taxon>Ruminantia</taxon>
        <taxon>Pecora</taxon>
        <taxon>Bovidae</taxon>
        <taxon>Bovinae</taxon>
        <taxon>Bos</taxon>
    </lineage>
</organism>
<comment type="function">
    <text evidence="7">Catalyzes the oxidative deamination of primary and some secondary amines such as neurotransmitters, and exogenous amines including the tertiary amine, neurotoxin 1-methyl-4-phenyl-1,2,3,6-tetrahydropyridine (MPTP), with concomitant reduction of oxygen to hydrogen peroxide and participates in the metabolism of neuroactive and vasoactive amines in the central nervous system and peripheral tissues (PubMed:8003474). Preferentially degrades benzylamine and phenylethylamine (PubMed:8003474).</text>
</comment>
<comment type="catalytic activity">
    <reaction evidence="3">
        <text>a secondary aliphatic amine + O2 + H2O = a primary amine + an aldehyde + H2O2</text>
        <dbReference type="Rhea" id="RHEA:26414"/>
        <dbReference type="ChEBI" id="CHEBI:15377"/>
        <dbReference type="ChEBI" id="CHEBI:15379"/>
        <dbReference type="ChEBI" id="CHEBI:16240"/>
        <dbReference type="ChEBI" id="CHEBI:17478"/>
        <dbReference type="ChEBI" id="CHEBI:58855"/>
        <dbReference type="ChEBI" id="CHEBI:65296"/>
        <dbReference type="EC" id="1.4.3.4"/>
    </reaction>
</comment>
<comment type="catalytic activity">
    <reaction evidence="7">
        <text>a primary methyl amine + O2 + H2O = an aldehyde + H2O2 + NH4(+)</text>
        <dbReference type="Rhea" id="RHEA:16153"/>
        <dbReference type="ChEBI" id="CHEBI:15377"/>
        <dbReference type="ChEBI" id="CHEBI:15379"/>
        <dbReference type="ChEBI" id="CHEBI:16240"/>
        <dbReference type="ChEBI" id="CHEBI:17478"/>
        <dbReference type="ChEBI" id="CHEBI:28938"/>
        <dbReference type="ChEBI" id="CHEBI:228804"/>
        <dbReference type="EC" id="1.4.3.21"/>
    </reaction>
</comment>
<comment type="catalytic activity">
    <reaction evidence="7">
        <text>benzylamine + O2 + H2O = benzaldehyde + H2O2 + NH4(+)</text>
        <dbReference type="Rhea" id="RHEA:59424"/>
        <dbReference type="ChEBI" id="CHEBI:15377"/>
        <dbReference type="ChEBI" id="CHEBI:15379"/>
        <dbReference type="ChEBI" id="CHEBI:16240"/>
        <dbReference type="ChEBI" id="CHEBI:17169"/>
        <dbReference type="ChEBI" id="CHEBI:28938"/>
        <dbReference type="ChEBI" id="CHEBI:225238"/>
    </reaction>
    <physiologicalReaction direction="left-to-right" evidence="9">
        <dbReference type="Rhea" id="RHEA:59425"/>
    </physiologicalReaction>
</comment>
<comment type="catalytic activity">
    <reaction evidence="3">
        <text>(R)-adrenaline + O2 + H2O = (R)-3,4-dihydroxymandelaldehyde + methylamine + H2O2</text>
        <dbReference type="Rhea" id="RHEA:51168"/>
        <dbReference type="ChEBI" id="CHEBI:15377"/>
        <dbReference type="ChEBI" id="CHEBI:15379"/>
        <dbReference type="ChEBI" id="CHEBI:16240"/>
        <dbReference type="ChEBI" id="CHEBI:59338"/>
        <dbReference type="ChEBI" id="CHEBI:71406"/>
        <dbReference type="ChEBI" id="CHEBI:180943"/>
    </reaction>
</comment>
<comment type="catalytic activity">
    <reaction evidence="3">
        <text>dopamine + O2 + H2O = 3,4-dihydroxyphenylacetaldehyde + H2O2 + NH4(+)</text>
        <dbReference type="Rhea" id="RHEA:27946"/>
        <dbReference type="ChEBI" id="CHEBI:15377"/>
        <dbReference type="ChEBI" id="CHEBI:15379"/>
        <dbReference type="ChEBI" id="CHEBI:16240"/>
        <dbReference type="ChEBI" id="CHEBI:27978"/>
        <dbReference type="ChEBI" id="CHEBI:28938"/>
        <dbReference type="ChEBI" id="CHEBI:59905"/>
    </reaction>
</comment>
<comment type="catalytic activity">
    <reaction evidence="3">
        <text>tyramine + O2 + H2O = (4-hydroxyphenyl)acetaldehyde + H2O2 + NH4(+)</text>
        <dbReference type="Rhea" id="RHEA:30591"/>
        <dbReference type="ChEBI" id="CHEBI:15377"/>
        <dbReference type="ChEBI" id="CHEBI:15379"/>
        <dbReference type="ChEBI" id="CHEBI:15621"/>
        <dbReference type="ChEBI" id="CHEBI:16240"/>
        <dbReference type="ChEBI" id="CHEBI:28938"/>
        <dbReference type="ChEBI" id="CHEBI:327995"/>
    </reaction>
</comment>
<comment type="catalytic activity">
    <reaction evidence="3">
        <text>(R)-noradrenaline + O2 + H2O = (R)-3,4-dihydroxymandelaldehyde + H2O2 + NH4(+)</text>
        <dbReference type="Rhea" id="RHEA:69076"/>
        <dbReference type="ChEBI" id="CHEBI:15377"/>
        <dbReference type="ChEBI" id="CHEBI:15379"/>
        <dbReference type="ChEBI" id="CHEBI:16240"/>
        <dbReference type="ChEBI" id="CHEBI:28938"/>
        <dbReference type="ChEBI" id="CHEBI:72587"/>
        <dbReference type="ChEBI" id="CHEBI:180943"/>
    </reaction>
</comment>
<comment type="catalytic activity">
    <reaction evidence="3">
        <text>2-phenylethylamine + O2 + H2O = 2-phenylacetaldehyde + H2O2 + NH4(+)</text>
        <dbReference type="Rhea" id="RHEA:25265"/>
        <dbReference type="ChEBI" id="CHEBI:15377"/>
        <dbReference type="ChEBI" id="CHEBI:15379"/>
        <dbReference type="ChEBI" id="CHEBI:16240"/>
        <dbReference type="ChEBI" id="CHEBI:16424"/>
        <dbReference type="ChEBI" id="CHEBI:28938"/>
        <dbReference type="ChEBI" id="CHEBI:225237"/>
    </reaction>
</comment>
<comment type="catalytic activity">
    <reaction evidence="2">
        <text>N-acetylputrescine + O2 + H2O = 4-acetamidobutanal + H2O2 + NH4(+)</text>
        <dbReference type="Rhea" id="RHEA:70283"/>
        <dbReference type="ChEBI" id="CHEBI:7386"/>
        <dbReference type="ChEBI" id="CHEBI:15377"/>
        <dbReference type="ChEBI" id="CHEBI:15379"/>
        <dbReference type="ChEBI" id="CHEBI:16240"/>
        <dbReference type="ChEBI" id="CHEBI:28938"/>
        <dbReference type="ChEBI" id="CHEBI:58263"/>
    </reaction>
    <physiologicalReaction direction="left-to-right" evidence="2">
        <dbReference type="Rhea" id="RHEA:70284"/>
    </physiologicalReaction>
</comment>
<comment type="cofactor">
    <cofactor evidence="6">
        <name>FAD</name>
        <dbReference type="ChEBI" id="CHEBI:57692"/>
    </cofactor>
</comment>
<comment type="biophysicochemical properties">
    <kinetics>
        <KM evidence="7">0.5 mM for benzylamine</KM>
        <KM evidence="7">0.28 mM for dioxygen</KM>
    </kinetics>
</comment>
<comment type="subunit">
    <text>Monomer, homo- or heterodimer (containing two subunits of similar size). Each subunit contains a covalently bound flavin. Enzymatically active as monomer.</text>
</comment>
<comment type="subcellular location">
    <subcellularLocation>
        <location>Mitochondrion outer membrane</location>
        <topology>Single-pass type IV membrane protein</topology>
        <orientation>Cytoplasmic side</orientation>
    </subcellularLocation>
</comment>
<comment type="mass spectrometry"/>
<comment type="similarity">
    <text evidence="8">Belongs to the flavin monoamine oxidase family.</text>
</comment>
<gene>
    <name evidence="3" type="primary">MAOB</name>
</gene>
<keyword id="KW-0007">Acetylation</keyword>
<keyword id="KW-0903">Direct protein sequencing</keyword>
<keyword id="KW-0274">FAD</keyword>
<keyword id="KW-0285">Flavoprotein</keyword>
<keyword id="KW-0472">Membrane</keyword>
<keyword id="KW-0496">Mitochondrion</keyword>
<keyword id="KW-1000">Mitochondrion outer membrane</keyword>
<keyword id="KW-0560">Oxidoreductase</keyword>
<keyword id="KW-1185">Reference proteome</keyword>
<keyword id="KW-0812">Transmembrane</keyword>
<keyword id="KW-1133">Transmembrane helix</keyword>